<gene>
    <name evidence="1" type="primary">hemC</name>
    <name type="ordered locus">NE0590</name>
</gene>
<organism>
    <name type="scientific">Nitrosomonas europaea (strain ATCC 19718 / CIP 103999 / KCTC 2705 / NBRC 14298)</name>
    <dbReference type="NCBI Taxonomy" id="228410"/>
    <lineage>
        <taxon>Bacteria</taxon>
        <taxon>Pseudomonadati</taxon>
        <taxon>Pseudomonadota</taxon>
        <taxon>Betaproteobacteria</taxon>
        <taxon>Nitrosomonadales</taxon>
        <taxon>Nitrosomonadaceae</taxon>
        <taxon>Nitrosomonas</taxon>
    </lineage>
</organism>
<dbReference type="EC" id="2.5.1.61" evidence="1"/>
<dbReference type="EMBL" id="AL954747">
    <property type="protein sequence ID" value="CAD84501.1"/>
    <property type="molecule type" value="Genomic_DNA"/>
</dbReference>
<dbReference type="RefSeq" id="WP_011111216.1">
    <property type="nucleotide sequence ID" value="NC_004757.1"/>
</dbReference>
<dbReference type="SMR" id="Q82WS2"/>
<dbReference type="STRING" id="228410.NE0590"/>
<dbReference type="GeneID" id="87103790"/>
<dbReference type="KEGG" id="neu:NE0590"/>
<dbReference type="eggNOG" id="COG0181">
    <property type="taxonomic scope" value="Bacteria"/>
</dbReference>
<dbReference type="HOGENOM" id="CLU_019704_1_0_4"/>
<dbReference type="OrthoDB" id="9810298at2"/>
<dbReference type="PhylomeDB" id="Q82WS2"/>
<dbReference type="UniPathway" id="UPA00251">
    <property type="reaction ID" value="UER00319"/>
</dbReference>
<dbReference type="Proteomes" id="UP000001416">
    <property type="component" value="Chromosome"/>
</dbReference>
<dbReference type="GO" id="GO:0005737">
    <property type="term" value="C:cytoplasm"/>
    <property type="evidence" value="ECO:0007669"/>
    <property type="project" value="TreeGrafter"/>
</dbReference>
<dbReference type="GO" id="GO:0004418">
    <property type="term" value="F:hydroxymethylbilane synthase activity"/>
    <property type="evidence" value="ECO:0007669"/>
    <property type="project" value="UniProtKB-UniRule"/>
</dbReference>
<dbReference type="GO" id="GO:0006782">
    <property type="term" value="P:protoporphyrinogen IX biosynthetic process"/>
    <property type="evidence" value="ECO:0007669"/>
    <property type="project" value="UniProtKB-UniRule"/>
</dbReference>
<dbReference type="CDD" id="cd13646">
    <property type="entry name" value="PBP2_EcHMBS_like"/>
    <property type="match status" value="1"/>
</dbReference>
<dbReference type="FunFam" id="3.40.190.10:FF:000004">
    <property type="entry name" value="Porphobilinogen deaminase"/>
    <property type="match status" value="1"/>
</dbReference>
<dbReference type="FunFam" id="3.40.190.10:FF:000005">
    <property type="entry name" value="Porphobilinogen deaminase"/>
    <property type="match status" value="1"/>
</dbReference>
<dbReference type="Gene3D" id="3.40.190.10">
    <property type="entry name" value="Periplasmic binding protein-like II"/>
    <property type="match status" value="2"/>
</dbReference>
<dbReference type="Gene3D" id="3.30.160.40">
    <property type="entry name" value="Porphobilinogen deaminase, C-terminal domain"/>
    <property type="match status" value="1"/>
</dbReference>
<dbReference type="HAMAP" id="MF_00260">
    <property type="entry name" value="Porphobil_deam"/>
    <property type="match status" value="1"/>
</dbReference>
<dbReference type="InterPro" id="IPR000860">
    <property type="entry name" value="HemC"/>
</dbReference>
<dbReference type="InterPro" id="IPR022419">
    <property type="entry name" value="Porphobilin_deaminase_cofac_BS"/>
</dbReference>
<dbReference type="InterPro" id="IPR022417">
    <property type="entry name" value="Porphobilin_deaminase_N"/>
</dbReference>
<dbReference type="InterPro" id="IPR022418">
    <property type="entry name" value="Porphobilinogen_deaminase_C"/>
</dbReference>
<dbReference type="InterPro" id="IPR036803">
    <property type="entry name" value="Porphobilinogen_deaminase_C_sf"/>
</dbReference>
<dbReference type="NCBIfam" id="TIGR00212">
    <property type="entry name" value="hemC"/>
    <property type="match status" value="1"/>
</dbReference>
<dbReference type="PANTHER" id="PTHR11557">
    <property type="entry name" value="PORPHOBILINOGEN DEAMINASE"/>
    <property type="match status" value="1"/>
</dbReference>
<dbReference type="PANTHER" id="PTHR11557:SF0">
    <property type="entry name" value="PORPHOBILINOGEN DEAMINASE"/>
    <property type="match status" value="1"/>
</dbReference>
<dbReference type="Pfam" id="PF01379">
    <property type="entry name" value="Porphobil_deam"/>
    <property type="match status" value="1"/>
</dbReference>
<dbReference type="Pfam" id="PF03900">
    <property type="entry name" value="Porphobil_deamC"/>
    <property type="match status" value="1"/>
</dbReference>
<dbReference type="PIRSF" id="PIRSF001438">
    <property type="entry name" value="4pyrrol_synth_OHMeBilane_synth"/>
    <property type="match status" value="1"/>
</dbReference>
<dbReference type="PRINTS" id="PR00151">
    <property type="entry name" value="PORPHBDMNASE"/>
</dbReference>
<dbReference type="SUPFAM" id="SSF53850">
    <property type="entry name" value="Periplasmic binding protein-like II"/>
    <property type="match status" value="1"/>
</dbReference>
<dbReference type="SUPFAM" id="SSF54782">
    <property type="entry name" value="Porphobilinogen deaminase (hydroxymethylbilane synthase), C-terminal domain"/>
    <property type="match status" value="1"/>
</dbReference>
<dbReference type="PROSITE" id="PS00533">
    <property type="entry name" value="PORPHOBILINOGEN_DEAM"/>
    <property type="match status" value="1"/>
</dbReference>
<sequence>MSSPKKIVIASRESQLALWQANFIRGRLLELYPQTDITILGMTTKGDQILDVSLSKIGGKGLFIKELELALEDGRADIAVHSMKDVPMIVPSGFTLAAITEREDPRDAFVSNDFSSLEELPAGSVVGTSSLRRESQLRARFPHLQVRPLRGNVQTRLRKLDEGEYSAIILAAAGLKRLELGYRISMLLPPELSLPAVGQGALGIECRDNDPDMVEWMKPLHHAATACCVEAERAMSRMLGGSCQVPLGGFAEIFEDVLTLRGFVATPDGSRMIADKLCGKPESGEQVGQQLAQNLKAHGAEEILAALA</sequence>
<feature type="chain" id="PRO_0000142963" description="Porphobilinogen deaminase">
    <location>
        <begin position="1"/>
        <end position="308"/>
    </location>
</feature>
<feature type="modified residue" description="S-(dipyrrolylmethanemethyl)cysteine" evidence="1">
    <location>
        <position position="243"/>
    </location>
</feature>
<name>HEM3_NITEU</name>
<proteinExistence type="inferred from homology"/>
<accession>Q82WS2</accession>
<keyword id="KW-0627">Porphyrin biosynthesis</keyword>
<keyword id="KW-1185">Reference proteome</keyword>
<keyword id="KW-0808">Transferase</keyword>
<protein>
    <recommendedName>
        <fullName evidence="1">Porphobilinogen deaminase</fullName>
        <shortName evidence="1">PBG</shortName>
        <ecNumber evidence="1">2.5.1.61</ecNumber>
    </recommendedName>
    <alternativeName>
        <fullName evidence="1">Hydroxymethylbilane synthase</fullName>
        <shortName evidence="1">HMBS</shortName>
    </alternativeName>
    <alternativeName>
        <fullName evidence="1">Pre-uroporphyrinogen synthase</fullName>
    </alternativeName>
</protein>
<comment type="function">
    <text evidence="1">Tetrapolymerization of the monopyrrole PBG into the hydroxymethylbilane pre-uroporphyrinogen in several discrete steps.</text>
</comment>
<comment type="catalytic activity">
    <reaction evidence="1">
        <text>4 porphobilinogen + H2O = hydroxymethylbilane + 4 NH4(+)</text>
        <dbReference type="Rhea" id="RHEA:13185"/>
        <dbReference type="ChEBI" id="CHEBI:15377"/>
        <dbReference type="ChEBI" id="CHEBI:28938"/>
        <dbReference type="ChEBI" id="CHEBI:57845"/>
        <dbReference type="ChEBI" id="CHEBI:58126"/>
        <dbReference type="EC" id="2.5.1.61"/>
    </reaction>
</comment>
<comment type="cofactor">
    <cofactor evidence="1">
        <name>dipyrromethane</name>
        <dbReference type="ChEBI" id="CHEBI:60342"/>
    </cofactor>
    <text evidence="1">Binds 1 dipyrromethane group covalently.</text>
</comment>
<comment type="pathway">
    <text evidence="1">Porphyrin-containing compound metabolism; protoporphyrin-IX biosynthesis; coproporphyrinogen-III from 5-aminolevulinate: step 2/4.</text>
</comment>
<comment type="subunit">
    <text evidence="1">Monomer.</text>
</comment>
<comment type="miscellaneous">
    <text evidence="1">The porphobilinogen subunits are added to the dipyrromethane group.</text>
</comment>
<comment type="similarity">
    <text evidence="1">Belongs to the HMBS family.</text>
</comment>
<reference key="1">
    <citation type="journal article" date="2003" name="J. Bacteriol.">
        <title>Complete genome sequence of the ammonia-oxidizing bacterium and obligate chemolithoautotroph Nitrosomonas europaea.</title>
        <authorList>
            <person name="Chain P."/>
            <person name="Lamerdin J.E."/>
            <person name="Larimer F.W."/>
            <person name="Regala W."/>
            <person name="Lao V."/>
            <person name="Land M.L."/>
            <person name="Hauser L."/>
            <person name="Hooper A.B."/>
            <person name="Klotz M.G."/>
            <person name="Norton J."/>
            <person name="Sayavedra-Soto L.A."/>
            <person name="Arciero D.M."/>
            <person name="Hommes N.G."/>
            <person name="Whittaker M.M."/>
            <person name="Arp D.J."/>
        </authorList>
    </citation>
    <scope>NUCLEOTIDE SEQUENCE [LARGE SCALE GENOMIC DNA]</scope>
    <source>
        <strain>ATCC 19718 / CIP 103999 / KCTC 2705 / NBRC 14298</strain>
    </source>
</reference>
<evidence type="ECO:0000255" key="1">
    <source>
        <dbReference type="HAMAP-Rule" id="MF_00260"/>
    </source>
</evidence>